<accession>Q39ZT7</accession>
<reference key="1">
    <citation type="submission" date="2005-10" db="EMBL/GenBank/DDBJ databases">
        <title>Complete sequence of Pelobacter carbinolicus DSM 2380.</title>
        <authorList>
            <person name="Copeland A."/>
            <person name="Lucas S."/>
            <person name="Lapidus A."/>
            <person name="Barry K."/>
            <person name="Detter J.C."/>
            <person name="Glavina T."/>
            <person name="Hammon N."/>
            <person name="Israni S."/>
            <person name="Pitluck S."/>
            <person name="Chertkov O."/>
            <person name="Schmutz J."/>
            <person name="Larimer F."/>
            <person name="Land M."/>
            <person name="Kyrpides N."/>
            <person name="Ivanova N."/>
            <person name="Richardson P."/>
        </authorList>
    </citation>
    <scope>NUCLEOTIDE SEQUENCE [LARGE SCALE GENOMIC DNA]</scope>
    <source>
        <strain>DSM 2380 / NBRC 103641 / GraBd1</strain>
    </source>
</reference>
<gene>
    <name evidence="1" type="primary">atpF1</name>
    <name type="ordered locus">Pcar_0945</name>
</gene>
<gene>
    <name evidence="1" type="primary">atpF3</name>
    <name type="ordered locus">Pcar_3135</name>
</gene>
<dbReference type="EMBL" id="CP000142">
    <property type="protein sequence ID" value="ABA88198.1"/>
    <property type="molecule type" value="Genomic_DNA"/>
</dbReference>
<dbReference type="EMBL" id="CP000142">
    <property type="protein sequence ID" value="ABA90370.1"/>
    <property type="molecule type" value="Genomic_DNA"/>
</dbReference>
<dbReference type="RefSeq" id="WP_011340669.1">
    <property type="nucleotide sequence ID" value="NC_007498.2"/>
</dbReference>
<dbReference type="SMR" id="Q39ZT7"/>
<dbReference type="STRING" id="338963.Pcar_0945"/>
<dbReference type="KEGG" id="pca:Pcar_0945"/>
<dbReference type="KEGG" id="pca:Pcar_3135"/>
<dbReference type="eggNOG" id="COG0711">
    <property type="taxonomic scope" value="Bacteria"/>
</dbReference>
<dbReference type="HOGENOM" id="CLU_079215_3_0_7"/>
<dbReference type="OrthoDB" id="5471016at2"/>
<dbReference type="Proteomes" id="UP000002534">
    <property type="component" value="Chromosome"/>
</dbReference>
<dbReference type="GO" id="GO:0005886">
    <property type="term" value="C:plasma membrane"/>
    <property type="evidence" value="ECO:0007669"/>
    <property type="project" value="UniProtKB-SubCell"/>
</dbReference>
<dbReference type="GO" id="GO:0045259">
    <property type="term" value="C:proton-transporting ATP synthase complex"/>
    <property type="evidence" value="ECO:0007669"/>
    <property type="project" value="UniProtKB-KW"/>
</dbReference>
<dbReference type="GO" id="GO:0046933">
    <property type="term" value="F:proton-transporting ATP synthase activity, rotational mechanism"/>
    <property type="evidence" value="ECO:0007669"/>
    <property type="project" value="UniProtKB-UniRule"/>
</dbReference>
<dbReference type="GO" id="GO:0046961">
    <property type="term" value="F:proton-transporting ATPase activity, rotational mechanism"/>
    <property type="evidence" value="ECO:0007669"/>
    <property type="project" value="TreeGrafter"/>
</dbReference>
<dbReference type="CDD" id="cd06503">
    <property type="entry name" value="ATP-synt_Fo_b"/>
    <property type="match status" value="1"/>
</dbReference>
<dbReference type="HAMAP" id="MF_01398">
    <property type="entry name" value="ATP_synth_b_bprime"/>
    <property type="match status" value="1"/>
</dbReference>
<dbReference type="InterPro" id="IPR002146">
    <property type="entry name" value="ATP_synth_b/b'su_bac/chlpt"/>
</dbReference>
<dbReference type="InterPro" id="IPR050059">
    <property type="entry name" value="ATP_synthase_B_chain"/>
</dbReference>
<dbReference type="PANTHER" id="PTHR33445">
    <property type="entry name" value="ATP SYNTHASE SUBUNIT B', CHLOROPLASTIC"/>
    <property type="match status" value="1"/>
</dbReference>
<dbReference type="PANTHER" id="PTHR33445:SF2">
    <property type="entry name" value="ATP SYNTHASE SUBUNIT B', CHLOROPLASTIC"/>
    <property type="match status" value="1"/>
</dbReference>
<dbReference type="Pfam" id="PF00430">
    <property type="entry name" value="ATP-synt_B"/>
    <property type="match status" value="1"/>
</dbReference>
<evidence type="ECO:0000255" key="1">
    <source>
        <dbReference type="HAMAP-Rule" id="MF_01398"/>
    </source>
</evidence>
<feature type="chain" id="PRO_0000368648" description="ATP synthase subunit b 1">
    <location>
        <begin position="1"/>
        <end position="191"/>
    </location>
</feature>
<feature type="transmembrane region" description="Helical" evidence="1">
    <location>
        <begin position="7"/>
        <end position="25"/>
    </location>
</feature>
<organism>
    <name type="scientific">Syntrophotalea carbinolica (strain DSM 2380 / NBRC 103641 / GraBd1)</name>
    <name type="common">Pelobacter carbinolicus</name>
    <dbReference type="NCBI Taxonomy" id="338963"/>
    <lineage>
        <taxon>Bacteria</taxon>
        <taxon>Pseudomonadati</taxon>
        <taxon>Thermodesulfobacteriota</taxon>
        <taxon>Desulfuromonadia</taxon>
        <taxon>Desulfuromonadales</taxon>
        <taxon>Syntrophotaleaceae</taxon>
        <taxon>Syntrophotalea</taxon>
    </lineage>
</organism>
<keyword id="KW-0066">ATP synthesis</keyword>
<keyword id="KW-0997">Cell inner membrane</keyword>
<keyword id="KW-1003">Cell membrane</keyword>
<keyword id="KW-0138">CF(0)</keyword>
<keyword id="KW-0375">Hydrogen ion transport</keyword>
<keyword id="KW-0406">Ion transport</keyword>
<keyword id="KW-0472">Membrane</keyword>
<keyword id="KW-1185">Reference proteome</keyword>
<keyword id="KW-0812">Transmembrane</keyword>
<keyword id="KW-1133">Transmembrane helix</keyword>
<keyword id="KW-0813">Transport</keyword>
<protein>
    <recommendedName>
        <fullName evidence="1">ATP synthase subunit b 1</fullName>
    </recommendedName>
    <alternativeName>
        <fullName evidence="1">ATP synthase F(0) sector subunit b 1</fullName>
    </alternativeName>
    <alternativeName>
        <fullName evidence="1">ATPase subunit I 1</fullName>
    </alternativeName>
    <alternativeName>
        <fullName evidence="1">F-type ATPase subunit b 1</fullName>
        <shortName evidence="1">F-ATPase subunit b 1</shortName>
    </alternativeName>
</protein>
<name>ATPF1_SYNC1</name>
<proteinExistence type="inferred from homology"/>
<comment type="function">
    <text evidence="1">F(1)F(0) ATP synthase produces ATP from ADP in the presence of a proton or sodium gradient. F-type ATPases consist of two structural domains, F(1) containing the extramembraneous catalytic core and F(0) containing the membrane proton channel, linked together by a central stalk and a peripheral stalk. During catalysis, ATP synthesis in the catalytic domain of F(1) is coupled via a rotary mechanism of the central stalk subunits to proton translocation.</text>
</comment>
<comment type="function">
    <text evidence="1">Component of the F(0) channel, it forms part of the peripheral stalk, linking F(1) to F(0).</text>
</comment>
<comment type="subunit">
    <text evidence="1">F-type ATPases have 2 components, F(1) - the catalytic core - and F(0) - the membrane proton channel. F(1) has five subunits: alpha(3), beta(3), gamma(1), delta(1), epsilon(1). F(0) has three main subunits: a(1), b(2) and c(10-14). The alpha and beta chains form an alternating ring which encloses part of the gamma chain. F(1) is attached to F(0) by a central stalk formed by the gamma and epsilon chains, while a peripheral stalk is formed by the delta and b chains.</text>
</comment>
<comment type="subcellular location">
    <subcellularLocation>
        <location evidence="1">Cell inner membrane</location>
        <topology evidence="1">Single-pass membrane protein</topology>
    </subcellularLocation>
</comment>
<comment type="similarity">
    <text evidence="1">Belongs to the ATPase B chain family.</text>
</comment>
<sequence length="191" mass="21470">MSRHSRRMRILCLCATTLLMAGSALASEAGGHADGQLKDFLYRLLDFGITFGALYFLLRGPLKRALSARRQRVAEALEQARQMQASAERRFAACRQQLADADAQIAQLTADLKAESALQCQRIEEQARKMADDIRSEATRSAAREIEAARKQLHQEAVRLAMELAEQRLKQQIAPQDQARLVDEYLRKTGE</sequence>